<protein>
    <recommendedName>
        <fullName>Probable protein E5</fullName>
    </recommendedName>
</protein>
<proteinExistence type="inferred from homology"/>
<dbReference type="EMBL" id="X62844">
    <property type="protein sequence ID" value="CAA44660.1"/>
    <property type="molecule type" value="Genomic_DNA"/>
</dbReference>
<dbReference type="SMR" id="Q02268"/>
<dbReference type="Proteomes" id="UP000000469">
    <property type="component" value="Genome"/>
</dbReference>
<dbReference type="InterPro" id="IPR004270">
    <property type="entry name" value="Papilloma_E5_alpha"/>
</dbReference>
<dbReference type="Pfam" id="PF03025">
    <property type="entry name" value="Papilloma_E5"/>
    <property type="match status" value="1"/>
</dbReference>
<sequence length="94" mass="10717">MELQVVPVDFTAKATSQSLLPLLIALTVCFLSIIILIFVSEFLLYSSVLVLTLLLYLLLWLLLTPPLQFFLLTLSLCFLPAFCIHQYILQTQQQ</sequence>
<organismHost>
    <name type="scientific">Pan paniscus</name>
    <name type="common">Pygmy chimpanzee</name>
    <name type="synonym">Bonobo</name>
    <dbReference type="NCBI Taxonomy" id="9597"/>
</organismHost>
<comment type="similarity">
    <text evidence="1">Belongs to the papillomaviridae E5 protein family.</text>
</comment>
<reference key="1">
    <citation type="journal article" date="1992" name="Virology">
        <title>Human papillomavirus type 13 and pygmy chimpanzee papillomavirus type 1: comparison of the genome organizations.</title>
        <authorList>
            <person name="van Ranst M."/>
            <person name="Fuse A."/>
            <person name="Fiten P."/>
            <person name="Beuken E."/>
            <person name="Pfister H."/>
            <person name="Burk R.D."/>
            <person name="Opdenakker G."/>
        </authorList>
    </citation>
    <scope>NUCLEOTIDE SEQUENCE [GENOMIC DNA]</scope>
</reference>
<feature type="chain" id="PRO_0000133300" description="Probable protein E5">
    <location>
        <begin position="1"/>
        <end position="94"/>
    </location>
</feature>
<accession>Q02268</accession>
<evidence type="ECO:0000305" key="1"/>
<keyword id="KW-0244">Early protein</keyword>
<keyword id="KW-1185">Reference proteome</keyword>
<gene>
    <name type="primary">E5</name>
</gene>
<organism>
    <name type="scientific">Pygmy chimpanzee papillomavirus type 1</name>
    <name type="common">PCPV-1</name>
    <dbReference type="NCBI Taxonomy" id="10576"/>
    <lineage>
        <taxon>Viruses</taxon>
        <taxon>Monodnaviria</taxon>
        <taxon>Shotokuvirae</taxon>
        <taxon>Cossaviricota</taxon>
        <taxon>Papovaviricetes</taxon>
        <taxon>Zurhausenvirales</taxon>
        <taxon>Papillomaviridae</taxon>
        <taxon>Firstpapillomavirinae</taxon>
        <taxon>Alphapapillomavirus</taxon>
        <taxon>Alphapapillomavirus 10</taxon>
    </lineage>
</organism>
<name>VE5_PCPV1</name>